<protein>
    <recommendedName>
        <fullName evidence="1">Phosphoribosyl-ATP pyrophosphatase</fullName>
        <shortName evidence="1">PRA-PH</shortName>
        <ecNumber evidence="1">3.6.1.31</ecNumber>
    </recommendedName>
</protein>
<sequence>MEFLLQLENILKKRKQDLPDKSYTADLFRGGVDRILKKVGEEAGEVIIAAKNSDKKELTHEVADLLFHLQVLLVEQGLSLQEIVEELHKRHS</sequence>
<proteinExistence type="inferred from homology"/>
<reference key="1">
    <citation type="journal article" date="2003" name="Nature">
        <title>Unique physiological and pathogenic features of Leptospira interrogans revealed by whole-genome sequencing.</title>
        <authorList>
            <person name="Ren S.-X."/>
            <person name="Fu G."/>
            <person name="Jiang X.-G."/>
            <person name="Zeng R."/>
            <person name="Miao Y.-G."/>
            <person name="Xu H."/>
            <person name="Zhang Y.-X."/>
            <person name="Xiong H."/>
            <person name="Lu G."/>
            <person name="Lu L.-F."/>
            <person name="Jiang H.-Q."/>
            <person name="Jia J."/>
            <person name="Tu Y.-F."/>
            <person name="Jiang J.-X."/>
            <person name="Gu W.-Y."/>
            <person name="Zhang Y.-Q."/>
            <person name="Cai Z."/>
            <person name="Sheng H.-H."/>
            <person name="Yin H.-F."/>
            <person name="Zhang Y."/>
            <person name="Zhu G.-F."/>
            <person name="Wan M."/>
            <person name="Huang H.-L."/>
            <person name="Qian Z."/>
            <person name="Wang S.-Y."/>
            <person name="Ma W."/>
            <person name="Yao Z.-J."/>
            <person name="Shen Y."/>
            <person name="Qiang B.-Q."/>
            <person name="Xia Q.-C."/>
            <person name="Guo X.-K."/>
            <person name="Danchin A."/>
            <person name="Saint Girons I."/>
            <person name="Somerville R.L."/>
            <person name="Wen Y.-M."/>
            <person name="Shi M.-H."/>
            <person name="Chen Z."/>
            <person name="Xu J.-G."/>
            <person name="Zhao G.-P."/>
        </authorList>
    </citation>
    <scope>NUCLEOTIDE SEQUENCE [LARGE SCALE GENOMIC DNA]</scope>
    <source>
        <strain>56601</strain>
    </source>
</reference>
<organism>
    <name type="scientific">Leptospira interrogans serogroup Icterohaemorrhagiae serovar Lai (strain 56601)</name>
    <dbReference type="NCBI Taxonomy" id="189518"/>
    <lineage>
        <taxon>Bacteria</taxon>
        <taxon>Pseudomonadati</taxon>
        <taxon>Spirochaetota</taxon>
        <taxon>Spirochaetia</taxon>
        <taxon>Leptospirales</taxon>
        <taxon>Leptospiraceae</taxon>
        <taxon>Leptospira</taxon>
    </lineage>
</organism>
<name>HIS2_LEPIN</name>
<accession>Q8EXX8</accession>
<keyword id="KW-0028">Amino-acid biosynthesis</keyword>
<keyword id="KW-0067">ATP-binding</keyword>
<keyword id="KW-0963">Cytoplasm</keyword>
<keyword id="KW-0368">Histidine biosynthesis</keyword>
<keyword id="KW-0378">Hydrolase</keyword>
<keyword id="KW-0547">Nucleotide-binding</keyword>
<keyword id="KW-1185">Reference proteome</keyword>
<comment type="catalytic activity">
    <reaction evidence="1">
        <text>1-(5-phospho-beta-D-ribosyl)-ATP + H2O = 1-(5-phospho-beta-D-ribosyl)-5'-AMP + diphosphate + H(+)</text>
        <dbReference type="Rhea" id="RHEA:22828"/>
        <dbReference type="ChEBI" id="CHEBI:15377"/>
        <dbReference type="ChEBI" id="CHEBI:15378"/>
        <dbReference type="ChEBI" id="CHEBI:33019"/>
        <dbReference type="ChEBI" id="CHEBI:59457"/>
        <dbReference type="ChEBI" id="CHEBI:73183"/>
        <dbReference type="EC" id="3.6.1.31"/>
    </reaction>
</comment>
<comment type="pathway">
    <text evidence="1">Amino-acid biosynthesis; L-histidine biosynthesis; L-histidine from 5-phospho-alpha-D-ribose 1-diphosphate: step 2/9.</text>
</comment>
<comment type="subcellular location">
    <subcellularLocation>
        <location evidence="1">Cytoplasm</location>
    </subcellularLocation>
</comment>
<comment type="similarity">
    <text evidence="1">Belongs to the PRA-PH family.</text>
</comment>
<dbReference type="EC" id="3.6.1.31" evidence="1"/>
<dbReference type="EMBL" id="AE010301">
    <property type="protein sequence ID" value="AAN51638.1"/>
    <property type="molecule type" value="Genomic_DNA"/>
</dbReference>
<dbReference type="RefSeq" id="NP_714623.1">
    <property type="nucleotide sequence ID" value="NC_004343.2"/>
</dbReference>
<dbReference type="RefSeq" id="WP_000394955.1">
    <property type="nucleotide sequence ID" value="NC_004343.2"/>
</dbReference>
<dbReference type="SMR" id="Q8EXX8"/>
<dbReference type="STRING" id="189518.LB_079"/>
<dbReference type="PaxDb" id="189518-LB_079"/>
<dbReference type="EnsemblBacteria" id="AAN51638">
    <property type="protein sequence ID" value="AAN51638"/>
    <property type="gene ID" value="LB_079"/>
</dbReference>
<dbReference type="GeneID" id="61141257"/>
<dbReference type="KEGG" id="lil:LB_079"/>
<dbReference type="PATRIC" id="fig|189518.3.peg.4407"/>
<dbReference type="HOGENOM" id="CLU_123337_1_2_12"/>
<dbReference type="InParanoid" id="Q8EXX8"/>
<dbReference type="OrthoDB" id="9795769at2"/>
<dbReference type="UniPathway" id="UPA00031">
    <property type="reaction ID" value="UER00007"/>
</dbReference>
<dbReference type="PRO" id="PR:Q8EXX8"/>
<dbReference type="Proteomes" id="UP000001408">
    <property type="component" value="Chromosome II"/>
</dbReference>
<dbReference type="GO" id="GO:0005737">
    <property type="term" value="C:cytoplasm"/>
    <property type="evidence" value="ECO:0007669"/>
    <property type="project" value="UniProtKB-SubCell"/>
</dbReference>
<dbReference type="GO" id="GO:0005524">
    <property type="term" value="F:ATP binding"/>
    <property type="evidence" value="ECO:0007669"/>
    <property type="project" value="UniProtKB-KW"/>
</dbReference>
<dbReference type="GO" id="GO:0004636">
    <property type="term" value="F:phosphoribosyl-ATP diphosphatase activity"/>
    <property type="evidence" value="ECO:0007669"/>
    <property type="project" value="UniProtKB-UniRule"/>
</dbReference>
<dbReference type="GO" id="GO:0000105">
    <property type="term" value="P:L-histidine biosynthetic process"/>
    <property type="evidence" value="ECO:0007669"/>
    <property type="project" value="UniProtKB-UniRule"/>
</dbReference>
<dbReference type="CDD" id="cd11534">
    <property type="entry name" value="NTP-PPase_HisIE_like"/>
    <property type="match status" value="1"/>
</dbReference>
<dbReference type="FunFam" id="1.10.287.1080:FF:000002">
    <property type="entry name" value="Histidine biosynthesis bifunctional protein HisIE"/>
    <property type="match status" value="1"/>
</dbReference>
<dbReference type="Gene3D" id="1.10.287.1080">
    <property type="entry name" value="MazG-like"/>
    <property type="match status" value="1"/>
</dbReference>
<dbReference type="HAMAP" id="MF_01020">
    <property type="entry name" value="HisE"/>
    <property type="match status" value="1"/>
</dbReference>
<dbReference type="InterPro" id="IPR008179">
    <property type="entry name" value="HisE"/>
</dbReference>
<dbReference type="InterPro" id="IPR021130">
    <property type="entry name" value="PRib-ATP_PPHydrolase-like"/>
</dbReference>
<dbReference type="NCBIfam" id="TIGR03188">
    <property type="entry name" value="histidine_hisI"/>
    <property type="match status" value="1"/>
</dbReference>
<dbReference type="NCBIfam" id="NF001611">
    <property type="entry name" value="PRK00400.1-3"/>
    <property type="match status" value="1"/>
</dbReference>
<dbReference type="PANTHER" id="PTHR42945">
    <property type="entry name" value="HISTIDINE BIOSYNTHESIS BIFUNCTIONAL PROTEIN"/>
    <property type="match status" value="1"/>
</dbReference>
<dbReference type="PANTHER" id="PTHR42945:SF9">
    <property type="entry name" value="HISTIDINE BIOSYNTHESIS BIFUNCTIONAL PROTEIN HISIE"/>
    <property type="match status" value="1"/>
</dbReference>
<dbReference type="Pfam" id="PF01503">
    <property type="entry name" value="PRA-PH"/>
    <property type="match status" value="1"/>
</dbReference>
<dbReference type="SUPFAM" id="SSF101386">
    <property type="entry name" value="all-alpha NTP pyrophosphatases"/>
    <property type="match status" value="1"/>
</dbReference>
<evidence type="ECO:0000255" key="1">
    <source>
        <dbReference type="HAMAP-Rule" id="MF_01020"/>
    </source>
</evidence>
<feature type="chain" id="PRO_0000136365" description="Phosphoribosyl-ATP pyrophosphatase">
    <location>
        <begin position="1"/>
        <end position="92"/>
    </location>
</feature>
<gene>
    <name evidence="1" type="primary">hisE</name>
    <name type="ordered locus">LB_079</name>
</gene>